<reference key="1">
    <citation type="journal article" date="1996" name="Science">
        <title>Complete genome sequence of the methanogenic archaeon, Methanococcus jannaschii.</title>
        <authorList>
            <person name="Bult C.J."/>
            <person name="White O."/>
            <person name="Olsen G.J."/>
            <person name="Zhou L."/>
            <person name="Fleischmann R.D."/>
            <person name="Sutton G.G."/>
            <person name="Blake J.A."/>
            <person name="FitzGerald L.M."/>
            <person name="Clayton R.A."/>
            <person name="Gocayne J.D."/>
            <person name="Kerlavage A.R."/>
            <person name="Dougherty B.A."/>
            <person name="Tomb J.-F."/>
            <person name="Adams M.D."/>
            <person name="Reich C.I."/>
            <person name="Overbeek R."/>
            <person name="Kirkness E.F."/>
            <person name="Weinstock K.G."/>
            <person name="Merrick J.M."/>
            <person name="Glodek A."/>
            <person name="Scott J.L."/>
            <person name="Geoghagen N.S.M."/>
            <person name="Weidman J.F."/>
            <person name="Fuhrmann J.L."/>
            <person name="Nguyen D."/>
            <person name="Utterback T.R."/>
            <person name="Kelley J.M."/>
            <person name="Peterson J.D."/>
            <person name="Sadow P.W."/>
            <person name="Hanna M.C."/>
            <person name="Cotton M.D."/>
            <person name="Roberts K.M."/>
            <person name="Hurst M.A."/>
            <person name="Kaine B.P."/>
            <person name="Borodovsky M."/>
            <person name="Klenk H.-P."/>
            <person name="Fraser C.M."/>
            <person name="Smith H.O."/>
            <person name="Woese C.R."/>
            <person name="Venter J.C."/>
        </authorList>
    </citation>
    <scope>NUCLEOTIDE SEQUENCE [LARGE SCALE GENOMIC DNA]</scope>
    <source>
        <strain>ATCC 43067 / DSM 2661 / JAL-1 / JCM 10045 / NBRC 100440</strain>
    </source>
</reference>
<accession>Q57562</accession>
<dbReference type="EMBL" id="L77117">
    <property type="protein sequence ID" value="AAB98077.1"/>
    <property type="molecule type" value="Genomic_DNA"/>
</dbReference>
<dbReference type="PIR" id="A64312">
    <property type="entry name" value="A64312"/>
</dbReference>
<dbReference type="RefSeq" id="WP_010869589.1">
    <property type="nucleotide sequence ID" value="NC_000909.1"/>
</dbReference>
<dbReference type="PDB" id="1K81">
    <property type="method" value="NMR"/>
    <property type="chains" value="A=108-143"/>
</dbReference>
<dbReference type="PDB" id="1K8B">
    <property type="method" value="NMR"/>
    <property type="chains" value="A=39-90"/>
</dbReference>
<dbReference type="PDBsum" id="1K81"/>
<dbReference type="PDBsum" id="1K8B"/>
<dbReference type="BMRB" id="Q57562"/>
<dbReference type="SMR" id="Q57562"/>
<dbReference type="FunCoup" id="Q57562">
    <property type="interactions" value="79"/>
</dbReference>
<dbReference type="STRING" id="243232.MJ_0097"/>
<dbReference type="PaxDb" id="243232-MJ_0097"/>
<dbReference type="EnsemblBacteria" id="AAB98077">
    <property type="protein sequence ID" value="AAB98077"/>
    <property type="gene ID" value="MJ_0097"/>
</dbReference>
<dbReference type="GeneID" id="1450936"/>
<dbReference type="KEGG" id="mja:MJ_0097"/>
<dbReference type="eggNOG" id="arCOG01640">
    <property type="taxonomic scope" value="Archaea"/>
</dbReference>
<dbReference type="HOGENOM" id="CLU_026663_3_1_2"/>
<dbReference type="InParanoid" id="Q57562"/>
<dbReference type="OrthoDB" id="38099at2157"/>
<dbReference type="PhylomeDB" id="Q57562"/>
<dbReference type="EvolutionaryTrace" id="Q57562"/>
<dbReference type="Proteomes" id="UP000000805">
    <property type="component" value="Chromosome"/>
</dbReference>
<dbReference type="GO" id="GO:0003743">
    <property type="term" value="F:translation initiation factor activity"/>
    <property type="evidence" value="ECO:0000318"/>
    <property type="project" value="GO_Central"/>
</dbReference>
<dbReference type="Gene3D" id="3.30.30.170">
    <property type="match status" value="1"/>
</dbReference>
<dbReference type="HAMAP" id="MF_00232">
    <property type="entry name" value="eIF_2_beta"/>
    <property type="match status" value="1"/>
</dbReference>
<dbReference type="InterPro" id="IPR045196">
    <property type="entry name" value="IF2/IF5"/>
</dbReference>
<dbReference type="InterPro" id="IPR004458">
    <property type="entry name" value="TIF2_bsu_arc"/>
</dbReference>
<dbReference type="InterPro" id="IPR002735">
    <property type="entry name" value="Transl_init_fac_IF2/IF5_dom"/>
</dbReference>
<dbReference type="InterPro" id="IPR016189">
    <property type="entry name" value="Transl_init_fac_IF2/IF5_N"/>
</dbReference>
<dbReference type="InterPro" id="IPR016190">
    <property type="entry name" value="Transl_init_fac_IF2/IF5_Zn-bd"/>
</dbReference>
<dbReference type="NCBIfam" id="TIGR00311">
    <property type="entry name" value="aIF-2beta"/>
    <property type="match status" value="1"/>
</dbReference>
<dbReference type="NCBIfam" id="NF003067">
    <property type="entry name" value="PRK03988.1"/>
    <property type="match status" value="1"/>
</dbReference>
<dbReference type="PANTHER" id="PTHR23001">
    <property type="entry name" value="EUKARYOTIC TRANSLATION INITIATION FACTOR"/>
    <property type="match status" value="1"/>
</dbReference>
<dbReference type="PANTHER" id="PTHR23001:SF3">
    <property type="entry name" value="EUKARYOTIC TRANSLATION INITIATION FACTOR 2 SUBUNIT 2"/>
    <property type="match status" value="1"/>
</dbReference>
<dbReference type="Pfam" id="PF01873">
    <property type="entry name" value="eIF-5_eIF-2B"/>
    <property type="match status" value="1"/>
</dbReference>
<dbReference type="SMART" id="SM00653">
    <property type="entry name" value="eIF2B_5"/>
    <property type="match status" value="1"/>
</dbReference>
<dbReference type="SUPFAM" id="SSF100966">
    <property type="entry name" value="Translation initiation factor 2 beta, aIF2beta, N-terminal domain"/>
    <property type="match status" value="1"/>
</dbReference>
<dbReference type="SUPFAM" id="SSF75689">
    <property type="entry name" value="Zinc-binding domain of translation initiation factor 2 beta"/>
    <property type="match status" value="1"/>
</dbReference>
<evidence type="ECO:0000250" key="1"/>
<evidence type="ECO:0000305" key="2"/>
<evidence type="ECO:0007829" key="3">
    <source>
        <dbReference type="PDB" id="1K81"/>
    </source>
</evidence>
<evidence type="ECO:0007829" key="4">
    <source>
        <dbReference type="PDB" id="1K8B"/>
    </source>
</evidence>
<comment type="function">
    <text evidence="1">eIF-2 functions in the early steps of protein synthesis by forming a ternary complex with GTP and initiator tRNA.</text>
</comment>
<comment type="subunit">
    <text evidence="1">Heterotrimer composed of an alpha, a beta and a gamma chain.</text>
</comment>
<comment type="similarity">
    <text evidence="2">Belongs to the eIF-2-beta/eIF-5 family.</text>
</comment>
<protein>
    <recommendedName>
        <fullName>Translation initiation factor 2 subunit beta</fullName>
    </recommendedName>
    <alternativeName>
        <fullName>aIF2-beta</fullName>
    </alternativeName>
    <alternativeName>
        <fullName>eIF-2-beta</fullName>
    </alternativeName>
</protein>
<keyword id="KW-0002">3D-structure</keyword>
<keyword id="KW-0396">Initiation factor</keyword>
<keyword id="KW-0648">Protein biosynthesis</keyword>
<keyword id="KW-1185">Reference proteome</keyword>
<feature type="chain" id="PRO_0000137421" description="Translation initiation factor 2 subunit beta">
    <location>
        <begin position="1"/>
        <end position="143"/>
    </location>
</feature>
<feature type="strand" evidence="4">
    <location>
        <begin position="40"/>
        <end position="43"/>
    </location>
</feature>
<feature type="strand" evidence="4">
    <location>
        <begin position="46"/>
        <end position="49"/>
    </location>
</feature>
<feature type="helix" evidence="4">
    <location>
        <begin position="52"/>
        <end position="60"/>
    </location>
</feature>
<feature type="helix" evidence="4">
    <location>
        <begin position="63"/>
        <end position="74"/>
    </location>
</feature>
<feature type="strand" evidence="4">
    <location>
        <begin position="75"/>
        <end position="81"/>
    </location>
</feature>
<feature type="strand" evidence="4">
    <location>
        <begin position="84"/>
        <end position="88"/>
    </location>
</feature>
<feature type="strand" evidence="3">
    <location>
        <begin position="111"/>
        <end position="113"/>
    </location>
</feature>
<feature type="strand" evidence="3">
    <location>
        <begin position="117"/>
        <end position="123"/>
    </location>
</feature>
<feature type="strand" evidence="3">
    <location>
        <begin position="126"/>
        <end position="132"/>
    </location>
</feature>
<feature type="turn" evidence="3">
    <location>
        <begin position="133"/>
        <end position="135"/>
    </location>
</feature>
<feature type="strand" evidence="3">
    <location>
        <begin position="136"/>
        <end position="140"/>
    </location>
</feature>
<name>IF2B_METJA</name>
<proteinExistence type="evidence at protein level"/>
<sequence>MSDLENIDYYDYKALLKRARSQIPDYVFQKDRFELPEIEILIEGNRTIIRNFRELAKAVNRDEEFFAKYLLKETGSAGNLEGGRLILQRRISPELLKSRINDFLREYVICRECGKPDTKIIKEGRVHLLKCMACGAIRPIRMI</sequence>
<gene>
    <name type="primary">eif2b</name>
    <name type="ordered locus">MJ0097</name>
</gene>
<organism>
    <name type="scientific">Methanocaldococcus jannaschii (strain ATCC 43067 / DSM 2661 / JAL-1 / JCM 10045 / NBRC 100440)</name>
    <name type="common">Methanococcus jannaschii</name>
    <dbReference type="NCBI Taxonomy" id="243232"/>
    <lineage>
        <taxon>Archaea</taxon>
        <taxon>Methanobacteriati</taxon>
        <taxon>Methanobacteriota</taxon>
        <taxon>Methanomada group</taxon>
        <taxon>Methanococci</taxon>
        <taxon>Methanococcales</taxon>
        <taxon>Methanocaldococcaceae</taxon>
        <taxon>Methanocaldococcus</taxon>
    </lineage>
</organism>